<comment type="function">
    <text evidence="1">Could be involved in insertion of integral membrane proteins into the membrane.</text>
</comment>
<comment type="subcellular location">
    <subcellularLocation>
        <location evidence="1">Cell inner membrane</location>
        <topology evidence="1">Peripheral membrane protein</topology>
        <orientation evidence="1">Cytoplasmic side</orientation>
    </subcellularLocation>
</comment>
<comment type="similarity">
    <text evidence="1">Belongs to the UPF0161 family.</text>
</comment>
<sequence length="74" mass="8485">MTSEFFAKILIILIRLYQILISPLFAPCCRFYPSCSEYAIIAVRKHGLSKGSRLALIRLFKCHPFHPGGYDPVR</sequence>
<feature type="chain" id="PRO_0000253191" description="Putative membrane protein insertion efficiency factor">
    <location>
        <begin position="1"/>
        <end position="74"/>
    </location>
</feature>
<organism>
    <name type="scientific">Syntrophus aciditrophicus (strain SB)</name>
    <dbReference type="NCBI Taxonomy" id="56780"/>
    <lineage>
        <taxon>Bacteria</taxon>
        <taxon>Pseudomonadati</taxon>
        <taxon>Thermodesulfobacteriota</taxon>
        <taxon>Syntrophia</taxon>
        <taxon>Syntrophales</taxon>
        <taxon>Syntrophaceae</taxon>
        <taxon>Syntrophus</taxon>
    </lineage>
</organism>
<dbReference type="EMBL" id="CP000252">
    <property type="protein sequence ID" value="ABC77020.1"/>
    <property type="molecule type" value="Genomic_DNA"/>
</dbReference>
<dbReference type="RefSeq" id="WP_011417049.1">
    <property type="nucleotide sequence ID" value="NC_007759.1"/>
</dbReference>
<dbReference type="FunCoup" id="Q2LSG3">
    <property type="interactions" value="265"/>
</dbReference>
<dbReference type="STRING" id="56780.SYN_01013"/>
<dbReference type="KEGG" id="sat:SYN_01013"/>
<dbReference type="eggNOG" id="COG0759">
    <property type="taxonomic scope" value="Bacteria"/>
</dbReference>
<dbReference type="HOGENOM" id="CLU_144811_6_0_7"/>
<dbReference type="InParanoid" id="Q2LSG3"/>
<dbReference type="OrthoDB" id="9801753at2"/>
<dbReference type="Proteomes" id="UP000001933">
    <property type="component" value="Chromosome"/>
</dbReference>
<dbReference type="GO" id="GO:0005886">
    <property type="term" value="C:plasma membrane"/>
    <property type="evidence" value="ECO:0007669"/>
    <property type="project" value="UniProtKB-SubCell"/>
</dbReference>
<dbReference type="HAMAP" id="MF_00386">
    <property type="entry name" value="UPF0161_YidD"/>
    <property type="match status" value="1"/>
</dbReference>
<dbReference type="InterPro" id="IPR002696">
    <property type="entry name" value="Membr_insert_effic_factor_YidD"/>
</dbReference>
<dbReference type="NCBIfam" id="TIGR00278">
    <property type="entry name" value="membrane protein insertion efficiency factor YidD"/>
    <property type="match status" value="1"/>
</dbReference>
<dbReference type="PANTHER" id="PTHR33383">
    <property type="entry name" value="MEMBRANE PROTEIN INSERTION EFFICIENCY FACTOR-RELATED"/>
    <property type="match status" value="1"/>
</dbReference>
<dbReference type="PANTHER" id="PTHR33383:SF1">
    <property type="entry name" value="MEMBRANE PROTEIN INSERTION EFFICIENCY FACTOR-RELATED"/>
    <property type="match status" value="1"/>
</dbReference>
<dbReference type="Pfam" id="PF01809">
    <property type="entry name" value="YidD"/>
    <property type="match status" value="1"/>
</dbReference>
<dbReference type="SMART" id="SM01234">
    <property type="entry name" value="Haemolytic"/>
    <property type="match status" value="1"/>
</dbReference>
<proteinExistence type="inferred from homology"/>
<name>YIDD_SYNAS</name>
<gene>
    <name type="ordered locus">SYNAS_11410</name>
    <name type="ORF">SYN_01013</name>
</gene>
<accession>Q2LSG3</accession>
<reference key="1">
    <citation type="journal article" date="2007" name="Proc. Natl. Acad. Sci. U.S.A.">
        <title>The genome of Syntrophus aciditrophicus: life at the thermodynamic limit of microbial growth.</title>
        <authorList>
            <person name="McInerney M.J."/>
            <person name="Rohlin L."/>
            <person name="Mouttaki H."/>
            <person name="Kim U."/>
            <person name="Krupp R.S."/>
            <person name="Rios-Hernandez L."/>
            <person name="Sieber J."/>
            <person name="Struchtemeyer C.G."/>
            <person name="Bhattacharyya A."/>
            <person name="Campbell J.W."/>
            <person name="Gunsalus R.P."/>
        </authorList>
    </citation>
    <scope>NUCLEOTIDE SEQUENCE [LARGE SCALE GENOMIC DNA]</scope>
    <source>
        <strain>SB</strain>
    </source>
</reference>
<evidence type="ECO:0000255" key="1">
    <source>
        <dbReference type="HAMAP-Rule" id="MF_00386"/>
    </source>
</evidence>
<keyword id="KW-0997">Cell inner membrane</keyword>
<keyword id="KW-1003">Cell membrane</keyword>
<keyword id="KW-0472">Membrane</keyword>
<keyword id="KW-1185">Reference proteome</keyword>
<protein>
    <recommendedName>
        <fullName evidence="1">Putative membrane protein insertion efficiency factor</fullName>
    </recommendedName>
</protein>